<feature type="chain" id="PRO_0000369139" description="UPF0736 protein BC_1176">
    <location>
        <begin position="1"/>
        <end position="248"/>
    </location>
</feature>
<organism>
    <name type="scientific">Bacillus cereus (strain ATCC 14579 / DSM 31 / CCUG 7414 / JCM 2152 / NBRC 15305 / NCIMB 9373 / NCTC 2599 / NRRL B-3711)</name>
    <dbReference type="NCBI Taxonomy" id="226900"/>
    <lineage>
        <taxon>Bacteria</taxon>
        <taxon>Bacillati</taxon>
        <taxon>Bacillota</taxon>
        <taxon>Bacilli</taxon>
        <taxon>Bacillales</taxon>
        <taxon>Bacillaceae</taxon>
        <taxon>Bacillus</taxon>
        <taxon>Bacillus cereus group</taxon>
    </lineage>
</organism>
<evidence type="ECO:0000255" key="1">
    <source>
        <dbReference type="HAMAP-Rule" id="MF_01860"/>
    </source>
</evidence>
<name>Y1176_BACCR</name>
<gene>
    <name type="ordered locus">BC_1176</name>
</gene>
<accession>Q81GL8</accession>
<keyword id="KW-1185">Reference proteome</keyword>
<protein>
    <recommendedName>
        <fullName evidence="1">UPF0736 protein BC_1176</fullName>
    </recommendedName>
</protein>
<sequence>MLYLHDVWVNWFEGEENGYNVCHFYEWRKDDTIELLDQVPLLKVDATLYHYIENELLELPQKMLKTYIIRLIFVKIMNVCSKSIALLLQNGKGIIAIDTIGYNVPIRKSRLIPRQEQMVYEMVENVQAEKYEFQVEETEKEHHILSPSPFIMNGLTRKERQLKQLLFMALDQLHTTKNTAEIRYWFTEWDPSAYGMVQHMEFEDIWAKLYDEAKTGWSDKHEQLCERLVKGQPFFEKLWEMENEQKVN</sequence>
<dbReference type="EMBL" id="AE016877">
    <property type="protein sequence ID" value="AAP08163.1"/>
    <property type="molecule type" value="Genomic_DNA"/>
</dbReference>
<dbReference type="RefSeq" id="NP_830962.1">
    <property type="nucleotide sequence ID" value="NC_004722.1"/>
</dbReference>
<dbReference type="SMR" id="Q81GL8"/>
<dbReference type="STRING" id="226900.BC_1176"/>
<dbReference type="KEGG" id="bce:BC1176"/>
<dbReference type="PATRIC" id="fig|226900.8.peg.1142"/>
<dbReference type="HOGENOM" id="CLU_1101152_0_0_9"/>
<dbReference type="Proteomes" id="UP000001417">
    <property type="component" value="Chromosome"/>
</dbReference>
<dbReference type="HAMAP" id="MF_01860">
    <property type="entry name" value="UPF0736"/>
    <property type="match status" value="1"/>
</dbReference>
<dbReference type="InterPro" id="IPR020909">
    <property type="entry name" value="UPF0736"/>
</dbReference>
<dbReference type="Pfam" id="PF12227">
    <property type="entry name" value="DUF3603"/>
    <property type="match status" value="1"/>
</dbReference>
<reference key="1">
    <citation type="journal article" date="2003" name="Nature">
        <title>Genome sequence of Bacillus cereus and comparative analysis with Bacillus anthracis.</title>
        <authorList>
            <person name="Ivanova N."/>
            <person name="Sorokin A."/>
            <person name="Anderson I."/>
            <person name="Galleron N."/>
            <person name="Candelon B."/>
            <person name="Kapatral V."/>
            <person name="Bhattacharyya A."/>
            <person name="Reznik G."/>
            <person name="Mikhailova N."/>
            <person name="Lapidus A."/>
            <person name="Chu L."/>
            <person name="Mazur M."/>
            <person name="Goltsman E."/>
            <person name="Larsen N."/>
            <person name="D'Souza M."/>
            <person name="Walunas T."/>
            <person name="Grechkin Y."/>
            <person name="Pusch G."/>
            <person name="Haselkorn R."/>
            <person name="Fonstein M."/>
            <person name="Ehrlich S.D."/>
            <person name="Overbeek R."/>
            <person name="Kyrpides N.C."/>
        </authorList>
    </citation>
    <scope>NUCLEOTIDE SEQUENCE [LARGE SCALE GENOMIC DNA]</scope>
    <source>
        <strain>ATCC 14579 / DSM 31 / CCUG 7414 / JCM 2152 / NBRC 15305 / NCIMB 9373 / NCTC 2599 / NRRL B-3711</strain>
    </source>
</reference>
<comment type="similarity">
    <text evidence="1">Belongs to the UPF0736 family.</text>
</comment>
<proteinExistence type="inferred from homology"/>